<feature type="chain" id="PRO_0000113956" description="Transcription termination/antitermination protein NusG">
    <location>
        <begin position="1"/>
        <end position="300"/>
    </location>
</feature>
<feature type="region of interest" description="Disordered" evidence="2">
    <location>
        <begin position="1"/>
        <end position="99"/>
    </location>
</feature>
<feature type="compositionally biased region" description="Acidic residues" evidence="2">
    <location>
        <begin position="14"/>
        <end position="41"/>
    </location>
</feature>
<feature type="compositionally biased region" description="Acidic residues" evidence="2">
    <location>
        <begin position="47"/>
        <end position="97"/>
    </location>
</feature>
<feature type="sequence conflict" description="In Ref. 1; BAA04282." evidence="3" ref="1">
    <original>ADADAAE</original>
    <variation>RDQTRRK</variation>
    <location>
        <begin position="75"/>
        <end position="81"/>
    </location>
</feature>
<feature type="sequence conflict" description="In Ref. 1; BAA04282." evidence="3" ref="1">
    <original>QEL</original>
    <variation>PGV</variation>
    <location>
        <begin position="104"/>
        <end position="106"/>
    </location>
</feature>
<feature type="sequence conflict" description="In Ref. 2; BAA06985." evidence="3" ref="2">
    <original>EL</original>
    <variation>DV</variation>
    <location>
        <begin position="105"/>
        <end position="106"/>
    </location>
</feature>
<feature type="sequence conflict" description="In Ref. 1; BAA04282." evidence="3" ref="1">
    <original>E</original>
    <variation>K</variation>
    <location>
        <position position="151"/>
    </location>
</feature>
<feature type="sequence conflict" description="In Ref. 1; BAA04282." evidence="3" ref="1">
    <original>L</original>
    <variation>Y</variation>
    <location>
        <position position="179"/>
    </location>
</feature>
<reference key="1">
    <citation type="journal article" date="1994" name="Biochim. Biophys. Acta">
        <title>Organization and nucleotide sequence of the secE-nusG region of Streptomyces griseus.</title>
        <authorList>
            <person name="Miyake K."/>
            <person name="Onaka H."/>
            <person name="Horinouchi S."/>
            <person name="Beppu T."/>
        </authorList>
    </citation>
    <scope>NUCLEOTIDE SEQUENCE [GENOMIC DNA]</scope>
    <source>
        <strain>A3(2) / NRRL B-16638</strain>
    </source>
</reference>
<reference key="2">
    <citation type="journal article" date="1995" name="Mol. Gen. Genet.">
        <title>Cloning, nucleotide sequence, and transcriptional analysis of the nusG gene of Streptomyces coelicolor A3(2), which encodes a putative transcriptional antiterminator.</title>
        <authorList>
            <person name="Puttikhunt C."/>
            <person name="Nihira T."/>
            <person name="Yamada Y."/>
        </authorList>
    </citation>
    <scope>NUCLEOTIDE SEQUENCE [GENOMIC DNA]</scope>
    <source>
        <strain>A3(2) / NRRL B-16638</strain>
    </source>
</reference>
<reference key="3">
    <citation type="journal article" date="2002" name="Nature">
        <title>Complete genome sequence of the model actinomycete Streptomyces coelicolor A3(2).</title>
        <authorList>
            <person name="Bentley S.D."/>
            <person name="Chater K.F."/>
            <person name="Cerdeno-Tarraga A.-M."/>
            <person name="Challis G.L."/>
            <person name="Thomson N.R."/>
            <person name="James K.D."/>
            <person name="Harris D.E."/>
            <person name="Quail M.A."/>
            <person name="Kieser H."/>
            <person name="Harper D."/>
            <person name="Bateman A."/>
            <person name="Brown S."/>
            <person name="Chandra G."/>
            <person name="Chen C.W."/>
            <person name="Collins M."/>
            <person name="Cronin A."/>
            <person name="Fraser A."/>
            <person name="Goble A."/>
            <person name="Hidalgo J."/>
            <person name="Hornsby T."/>
            <person name="Howarth S."/>
            <person name="Huang C.-H."/>
            <person name="Kieser T."/>
            <person name="Larke L."/>
            <person name="Murphy L.D."/>
            <person name="Oliver K."/>
            <person name="O'Neil S."/>
            <person name="Rabbinowitsch E."/>
            <person name="Rajandream M.A."/>
            <person name="Rutherford K.M."/>
            <person name="Rutter S."/>
            <person name="Seeger K."/>
            <person name="Saunders D."/>
            <person name="Sharp S."/>
            <person name="Squares R."/>
            <person name="Squares S."/>
            <person name="Taylor K."/>
            <person name="Warren T."/>
            <person name="Wietzorrek A."/>
            <person name="Woodward J.R."/>
            <person name="Barrell B.G."/>
            <person name="Parkhill J."/>
            <person name="Hopwood D.A."/>
        </authorList>
    </citation>
    <scope>NUCLEOTIDE SEQUENCE [LARGE SCALE GENOMIC DNA]</scope>
    <source>
        <strain>ATCC BAA-471 / A3(2) / M145</strain>
    </source>
</reference>
<comment type="function">
    <text evidence="1">Participates in transcription elongation, termination and antitermination.</text>
</comment>
<comment type="similarity">
    <text evidence="1">Belongs to the NusG family.</text>
</comment>
<keyword id="KW-1185">Reference proteome</keyword>
<keyword id="KW-0804">Transcription</keyword>
<keyword id="KW-0889">Transcription antitermination</keyword>
<keyword id="KW-0805">Transcription regulation</keyword>
<keyword id="KW-0806">Transcription termination</keyword>
<sequence length="300" mass="32845">MSDPNVNDAIEPVESVEDELGTVEGADNEDTEASAEAEAADDTVVAETDEDATDAEADETAEATDAEATEAEADADADAAEAEESEEEPEAEEPELDPIEKLRQELRVLPGEWYVIHTYAGYENRVKTNLEQRAVSLNVEDYIFQAEVPQEEVVQIKNGDRKTIRQNKLPGYVLVRMDLTNESWGVVRNTPGVTGFVGNAYDPYPLTLDEIVKMLAPEAEEKAAREAAEAEGKPAPQRKVEVQVLDFEVGDSVTVTDGPFATLQATINEINADSKKVKGLVEIFGRETPVELSFDQIQKN</sequence>
<gene>
    <name evidence="1" type="primary">nusG</name>
    <name type="ordered locus">SCO4647</name>
    <name type="ORF">SCD82.18</name>
</gene>
<dbReference type="EMBL" id="D17465">
    <property type="protein sequence ID" value="BAA04282.1"/>
    <property type="molecule type" value="Genomic_DNA"/>
</dbReference>
<dbReference type="EMBL" id="D32254">
    <property type="protein sequence ID" value="BAA06985.1"/>
    <property type="molecule type" value="Genomic_DNA"/>
</dbReference>
<dbReference type="EMBL" id="AL939120">
    <property type="protein sequence ID" value="CAB77421.1"/>
    <property type="molecule type" value="Genomic_DNA"/>
</dbReference>
<dbReference type="PIR" id="S41062">
    <property type="entry name" value="S41062"/>
</dbReference>
<dbReference type="PIR" id="S54717">
    <property type="entry name" value="S54717"/>
</dbReference>
<dbReference type="RefSeq" id="NP_628808.1">
    <property type="nucleotide sequence ID" value="NC_003888.3"/>
</dbReference>
<dbReference type="RefSeq" id="WP_011029791.1">
    <property type="nucleotide sequence ID" value="NZ_VNID01000028.1"/>
</dbReference>
<dbReference type="SMR" id="P36266"/>
<dbReference type="FunCoup" id="P36266">
    <property type="interactions" value="159"/>
</dbReference>
<dbReference type="STRING" id="100226.gene:17762296"/>
<dbReference type="PaxDb" id="100226-SCO4647"/>
<dbReference type="KEGG" id="sco:SCO4647"/>
<dbReference type="PATRIC" id="fig|100226.15.peg.4718"/>
<dbReference type="eggNOG" id="COG0250">
    <property type="taxonomic scope" value="Bacteria"/>
</dbReference>
<dbReference type="HOGENOM" id="CLU_067287_0_1_11"/>
<dbReference type="InParanoid" id="P36266"/>
<dbReference type="OrthoDB" id="9809075at2"/>
<dbReference type="PhylomeDB" id="P36266"/>
<dbReference type="Proteomes" id="UP000001973">
    <property type="component" value="Chromosome"/>
</dbReference>
<dbReference type="GO" id="GO:0005829">
    <property type="term" value="C:cytosol"/>
    <property type="evidence" value="ECO:0000318"/>
    <property type="project" value="GO_Central"/>
</dbReference>
<dbReference type="GO" id="GO:0006353">
    <property type="term" value="P:DNA-templated transcription termination"/>
    <property type="evidence" value="ECO:0007669"/>
    <property type="project" value="UniProtKB-UniRule"/>
</dbReference>
<dbReference type="GO" id="GO:0032784">
    <property type="term" value="P:regulation of DNA-templated transcription elongation"/>
    <property type="evidence" value="ECO:0007669"/>
    <property type="project" value="InterPro"/>
</dbReference>
<dbReference type="GO" id="GO:0031564">
    <property type="term" value="P:transcription antitermination"/>
    <property type="evidence" value="ECO:0007669"/>
    <property type="project" value="UniProtKB-UniRule"/>
</dbReference>
<dbReference type="GO" id="GO:0140673">
    <property type="term" value="P:transcription elongation-coupled chromatin remodeling"/>
    <property type="evidence" value="ECO:0007669"/>
    <property type="project" value="InterPro"/>
</dbReference>
<dbReference type="CDD" id="cd06091">
    <property type="entry name" value="KOW_NusG"/>
    <property type="match status" value="1"/>
</dbReference>
<dbReference type="CDD" id="cd09891">
    <property type="entry name" value="NGN_Bact_1"/>
    <property type="match status" value="1"/>
</dbReference>
<dbReference type="FunFam" id="2.30.30.30:FF:000002">
    <property type="entry name" value="Transcription termination/antitermination factor NusG"/>
    <property type="match status" value="1"/>
</dbReference>
<dbReference type="FunFam" id="3.30.70.940:FF:000002">
    <property type="entry name" value="Transcription termination/antitermination protein NusG"/>
    <property type="match status" value="1"/>
</dbReference>
<dbReference type="Gene3D" id="2.30.30.30">
    <property type="match status" value="1"/>
</dbReference>
<dbReference type="Gene3D" id="3.30.70.940">
    <property type="entry name" value="NusG, N-terminal domain"/>
    <property type="match status" value="1"/>
</dbReference>
<dbReference type="HAMAP" id="MF_00948">
    <property type="entry name" value="NusG"/>
    <property type="match status" value="1"/>
</dbReference>
<dbReference type="InterPro" id="IPR005824">
    <property type="entry name" value="KOW"/>
</dbReference>
<dbReference type="InterPro" id="IPR047050">
    <property type="entry name" value="NGN"/>
</dbReference>
<dbReference type="InterPro" id="IPR006645">
    <property type="entry name" value="NGN-like_dom"/>
</dbReference>
<dbReference type="InterPro" id="IPR036735">
    <property type="entry name" value="NGN_dom_sf"/>
</dbReference>
<dbReference type="InterPro" id="IPR043425">
    <property type="entry name" value="NusG-like"/>
</dbReference>
<dbReference type="InterPro" id="IPR014722">
    <property type="entry name" value="Rib_uL2_dom2"/>
</dbReference>
<dbReference type="InterPro" id="IPR001062">
    <property type="entry name" value="Transcrpt_antiterm_NusG"/>
</dbReference>
<dbReference type="InterPro" id="IPR015869">
    <property type="entry name" value="Transcrpt_antiterm_NusG_bac_CS"/>
</dbReference>
<dbReference type="InterPro" id="IPR008991">
    <property type="entry name" value="Translation_prot_SH3-like_sf"/>
</dbReference>
<dbReference type="NCBIfam" id="TIGR00922">
    <property type="entry name" value="nusG"/>
    <property type="match status" value="1"/>
</dbReference>
<dbReference type="PANTHER" id="PTHR30265">
    <property type="entry name" value="RHO-INTERACTING TRANSCRIPTION TERMINATION FACTOR NUSG"/>
    <property type="match status" value="1"/>
</dbReference>
<dbReference type="PANTHER" id="PTHR30265:SF2">
    <property type="entry name" value="TRANSCRIPTION TERMINATION_ANTITERMINATION PROTEIN NUSG"/>
    <property type="match status" value="1"/>
</dbReference>
<dbReference type="Pfam" id="PF02357">
    <property type="entry name" value="NusG"/>
    <property type="match status" value="1"/>
</dbReference>
<dbReference type="PRINTS" id="PR00338">
    <property type="entry name" value="NUSGTNSCPFCT"/>
</dbReference>
<dbReference type="SMART" id="SM00739">
    <property type="entry name" value="KOW"/>
    <property type="match status" value="1"/>
</dbReference>
<dbReference type="SMART" id="SM00738">
    <property type="entry name" value="NGN"/>
    <property type="match status" value="1"/>
</dbReference>
<dbReference type="SUPFAM" id="SSF82679">
    <property type="entry name" value="N-utilization substance G protein NusG, N-terminal domain"/>
    <property type="match status" value="1"/>
</dbReference>
<dbReference type="SUPFAM" id="SSF50104">
    <property type="entry name" value="Translation proteins SH3-like domain"/>
    <property type="match status" value="1"/>
</dbReference>
<dbReference type="PROSITE" id="PS01014">
    <property type="entry name" value="NUSG"/>
    <property type="match status" value="1"/>
</dbReference>
<evidence type="ECO:0000255" key="1">
    <source>
        <dbReference type="HAMAP-Rule" id="MF_00948"/>
    </source>
</evidence>
<evidence type="ECO:0000256" key="2">
    <source>
        <dbReference type="SAM" id="MobiDB-lite"/>
    </source>
</evidence>
<evidence type="ECO:0000305" key="3"/>
<name>NUSG_STRCO</name>
<accession>P36266</accession>
<accession>Q9L0L3</accession>
<organism>
    <name type="scientific">Streptomyces coelicolor (strain ATCC BAA-471 / A3(2) / M145)</name>
    <dbReference type="NCBI Taxonomy" id="100226"/>
    <lineage>
        <taxon>Bacteria</taxon>
        <taxon>Bacillati</taxon>
        <taxon>Actinomycetota</taxon>
        <taxon>Actinomycetes</taxon>
        <taxon>Kitasatosporales</taxon>
        <taxon>Streptomycetaceae</taxon>
        <taxon>Streptomyces</taxon>
        <taxon>Streptomyces albidoflavus group</taxon>
    </lineage>
</organism>
<proteinExistence type="inferred from homology"/>
<protein>
    <recommendedName>
        <fullName evidence="1">Transcription termination/antitermination protein NusG</fullName>
    </recommendedName>
</protein>